<sequence length="215" mass="22416">MQEPLRVPPSAPARLVVLASGTGSLLRSLLDAAVGDYPARVVAVGVDRECRAAEIAAEASVPVFTVRLADHPSRDAWDVAITAATAAHEPDLVVSAGFMRILGPQFLSRFYGRTLNTHPALLPAFPGTHGVADALAYGVKVTGATVHLVDAGTDTGPILAQQPVPVLDGDDEETLHERIKVTERRLLVAAVAALATHGVTVVGRTATMGRKVTIG</sequence>
<accession>P9WHM5</accession>
<accession>F2GHX1</accession>
<accession>L0T6W9</accession>
<accession>P71554</accession>
<accession>Q7D921</accession>
<gene>
    <name evidence="1" type="primary">purN</name>
    <name type="ordered locus">Rv0956</name>
</gene>
<keyword id="KW-0002">3D-structure</keyword>
<keyword id="KW-0460">Magnesium</keyword>
<keyword id="KW-0479">Metal-binding</keyword>
<keyword id="KW-0658">Purine biosynthesis</keyword>
<keyword id="KW-1185">Reference proteome</keyword>
<keyword id="KW-0808">Transferase</keyword>
<organism>
    <name type="scientific">Mycobacterium tuberculosis (strain ATCC 25618 / H37Rv)</name>
    <dbReference type="NCBI Taxonomy" id="83332"/>
    <lineage>
        <taxon>Bacteria</taxon>
        <taxon>Bacillati</taxon>
        <taxon>Actinomycetota</taxon>
        <taxon>Actinomycetes</taxon>
        <taxon>Mycobacteriales</taxon>
        <taxon>Mycobacteriaceae</taxon>
        <taxon>Mycobacterium</taxon>
        <taxon>Mycobacterium tuberculosis complex</taxon>
    </lineage>
</organism>
<evidence type="ECO:0000255" key="1">
    <source>
        <dbReference type="HAMAP-Rule" id="MF_01930"/>
    </source>
</evidence>
<evidence type="ECO:0000269" key="2">
    <source>
    </source>
</evidence>
<evidence type="ECO:0007829" key="3">
    <source>
        <dbReference type="PDB" id="3DA8"/>
    </source>
</evidence>
<comment type="function">
    <text evidence="1">Catalyzes the transfer of a formyl group from 10-formyltetrahydrofolate to 5-phospho-ribosyl-glycinamide (GAR), producing 5-phospho-ribosyl-N-formylglycinamide (FGAR) and tetrahydrofolate.</text>
</comment>
<comment type="catalytic activity">
    <reaction evidence="1">
        <text>N(1)-(5-phospho-beta-D-ribosyl)glycinamide + (6R)-10-formyltetrahydrofolate = N(2)-formyl-N(1)-(5-phospho-beta-D-ribosyl)glycinamide + (6S)-5,6,7,8-tetrahydrofolate + H(+)</text>
        <dbReference type="Rhea" id="RHEA:15053"/>
        <dbReference type="ChEBI" id="CHEBI:15378"/>
        <dbReference type="ChEBI" id="CHEBI:57453"/>
        <dbReference type="ChEBI" id="CHEBI:143788"/>
        <dbReference type="ChEBI" id="CHEBI:147286"/>
        <dbReference type="ChEBI" id="CHEBI:195366"/>
        <dbReference type="EC" id="2.1.2.2"/>
    </reaction>
</comment>
<comment type="pathway">
    <text evidence="1">Purine metabolism; IMP biosynthesis via de novo pathway; N(2)-formyl-N(1)-(5-phospho-D-ribosyl)glycinamide from N(1)-(5-phospho-D-ribosyl)glycinamide (10-formyl THF route): step 1/1.</text>
</comment>
<comment type="subunit">
    <text evidence="2">Homodimer.</text>
</comment>
<comment type="similarity">
    <text evidence="1">Belongs to the GART family.</text>
</comment>
<reference key="1">
    <citation type="journal article" date="1998" name="Nature">
        <title>Deciphering the biology of Mycobacterium tuberculosis from the complete genome sequence.</title>
        <authorList>
            <person name="Cole S.T."/>
            <person name="Brosch R."/>
            <person name="Parkhill J."/>
            <person name="Garnier T."/>
            <person name="Churcher C.M."/>
            <person name="Harris D.E."/>
            <person name="Gordon S.V."/>
            <person name="Eiglmeier K."/>
            <person name="Gas S."/>
            <person name="Barry C.E. III"/>
            <person name="Tekaia F."/>
            <person name="Badcock K."/>
            <person name="Basham D."/>
            <person name="Brown D."/>
            <person name="Chillingworth T."/>
            <person name="Connor R."/>
            <person name="Davies R.M."/>
            <person name="Devlin K."/>
            <person name="Feltwell T."/>
            <person name="Gentles S."/>
            <person name="Hamlin N."/>
            <person name="Holroyd S."/>
            <person name="Hornsby T."/>
            <person name="Jagels K."/>
            <person name="Krogh A."/>
            <person name="McLean J."/>
            <person name="Moule S."/>
            <person name="Murphy L.D."/>
            <person name="Oliver S."/>
            <person name="Osborne J."/>
            <person name="Quail M.A."/>
            <person name="Rajandream M.A."/>
            <person name="Rogers J."/>
            <person name="Rutter S."/>
            <person name="Seeger K."/>
            <person name="Skelton S."/>
            <person name="Squares S."/>
            <person name="Squares R."/>
            <person name="Sulston J.E."/>
            <person name="Taylor K."/>
            <person name="Whitehead S."/>
            <person name="Barrell B.G."/>
        </authorList>
    </citation>
    <scope>NUCLEOTIDE SEQUENCE [LARGE SCALE GENOMIC DNA]</scope>
    <source>
        <strain>ATCC 25618 / H37Rv</strain>
    </source>
</reference>
<reference key="2">
    <citation type="journal article" date="2011" name="Mol. Cell. Proteomics">
        <title>Proteogenomic analysis of Mycobacterium tuberculosis by high resolution mass spectrometry.</title>
        <authorList>
            <person name="Kelkar D.S."/>
            <person name="Kumar D."/>
            <person name="Kumar P."/>
            <person name="Balakrishnan L."/>
            <person name="Muthusamy B."/>
            <person name="Yadav A.K."/>
            <person name="Shrivastava P."/>
            <person name="Marimuthu A."/>
            <person name="Anand S."/>
            <person name="Sundaram H."/>
            <person name="Kingsbury R."/>
            <person name="Harsha H.C."/>
            <person name="Nair B."/>
            <person name="Prasad T.S."/>
            <person name="Chauhan D.S."/>
            <person name="Katoch K."/>
            <person name="Katoch V.M."/>
            <person name="Kumar P."/>
            <person name="Chaerkady R."/>
            <person name="Ramachandran S."/>
            <person name="Dash D."/>
            <person name="Pandey A."/>
        </authorList>
    </citation>
    <scope>IDENTIFICATION BY MASS SPECTROMETRY [LARGE SCALE ANALYSIS]</scope>
    <source>
        <strain>ATCC 25618 / H37Rv</strain>
    </source>
</reference>
<reference key="3">
    <citation type="journal article" date="2009" name="J. Mol. Biol.">
        <title>Structures of glycinamide ribonucleotide transformylase (PurN) from Mycobacterium tuberculosis reveal a novel dimer with relevance to drug discovery.</title>
        <authorList>
            <person name="Zhang Z."/>
            <person name="Caradoc-Davies T.T."/>
            <person name="Dickson J.M."/>
            <person name="Baker E.N."/>
            <person name="Squire C.J."/>
        </authorList>
    </citation>
    <scope>X-RAY CRYSTALLOGRAPHY (1.30 ANGSTROMS) OF 2-215 IN COMPLEX WITH SUBSTRATE ANALOGS AND MAGNESIUM IONS</scope>
    <scope>SUBUNIT</scope>
</reference>
<dbReference type="EC" id="2.1.2.2" evidence="1"/>
<dbReference type="EMBL" id="AL123456">
    <property type="protein sequence ID" value="CCP43704.1"/>
    <property type="molecule type" value="Genomic_DNA"/>
</dbReference>
<dbReference type="PIR" id="B70717">
    <property type="entry name" value="B70717"/>
</dbReference>
<dbReference type="RefSeq" id="NP_215471.1">
    <property type="nucleotide sequence ID" value="NC_000962.3"/>
</dbReference>
<dbReference type="RefSeq" id="WP_003898661.1">
    <property type="nucleotide sequence ID" value="NZ_NVQJ01000001.1"/>
</dbReference>
<dbReference type="PDB" id="3DA8">
    <property type="method" value="X-ray"/>
    <property type="resolution" value="1.30 A"/>
    <property type="chains" value="A/B=2-215"/>
</dbReference>
<dbReference type="PDB" id="3DCJ">
    <property type="method" value="X-ray"/>
    <property type="resolution" value="2.20 A"/>
    <property type="chains" value="A/B=2-215"/>
</dbReference>
<dbReference type="PDBsum" id="3DA8"/>
<dbReference type="PDBsum" id="3DCJ"/>
<dbReference type="SMR" id="P9WHM5"/>
<dbReference type="FunCoup" id="P9WHM5">
    <property type="interactions" value="337"/>
</dbReference>
<dbReference type="STRING" id="83332.Rv0956"/>
<dbReference type="PaxDb" id="83332-Rv0956"/>
<dbReference type="DNASU" id="885407"/>
<dbReference type="GeneID" id="885407"/>
<dbReference type="KEGG" id="mtu:Rv0956"/>
<dbReference type="KEGG" id="mtv:RVBD_0956"/>
<dbReference type="TubercuList" id="Rv0956"/>
<dbReference type="eggNOG" id="COG0299">
    <property type="taxonomic scope" value="Bacteria"/>
</dbReference>
<dbReference type="InParanoid" id="P9WHM5"/>
<dbReference type="OrthoDB" id="9806170at2"/>
<dbReference type="PhylomeDB" id="P9WHM5"/>
<dbReference type="BRENDA" id="2.1.2.2">
    <property type="organism ID" value="3445"/>
</dbReference>
<dbReference type="UniPathway" id="UPA00074">
    <property type="reaction ID" value="UER00126"/>
</dbReference>
<dbReference type="EvolutionaryTrace" id="P9WHM5"/>
<dbReference type="Proteomes" id="UP000001584">
    <property type="component" value="Chromosome"/>
</dbReference>
<dbReference type="GO" id="GO:0005737">
    <property type="term" value="C:cytoplasm"/>
    <property type="evidence" value="ECO:0000318"/>
    <property type="project" value="GO_Central"/>
</dbReference>
<dbReference type="GO" id="GO:0005829">
    <property type="term" value="C:cytosol"/>
    <property type="evidence" value="ECO:0000318"/>
    <property type="project" value="GO_Central"/>
</dbReference>
<dbReference type="GO" id="GO:0000287">
    <property type="term" value="F:magnesium ion binding"/>
    <property type="evidence" value="ECO:0000314"/>
    <property type="project" value="MTBBASE"/>
</dbReference>
<dbReference type="GO" id="GO:0004644">
    <property type="term" value="F:phosphoribosylglycinamide formyltransferase activity"/>
    <property type="evidence" value="ECO:0000318"/>
    <property type="project" value="GO_Central"/>
</dbReference>
<dbReference type="GO" id="GO:0006189">
    <property type="term" value="P:'de novo' IMP biosynthetic process"/>
    <property type="evidence" value="ECO:0000318"/>
    <property type="project" value="GO_Central"/>
</dbReference>
<dbReference type="GO" id="GO:0046653">
    <property type="term" value="P:tetrahydrofolate metabolic process"/>
    <property type="evidence" value="ECO:0000314"/>
    <property type="project" value="MTBBASE"/>
</dbReference>
<dbReference type="CDD" id="cd08645">
    <property type="entry name" value="FMT_core_GART"/>
    <property type="match status" value="1"/>
</dbReference>
<dbReference type="FunFam" id="3.40.50.170:FF:000008">
    <property type="entry name" value="Phosphoribosylglycinamide formyltransferase"/>
    <property type="match status" value="1"/>
</dbReference>
<dbReference type="Gene3D" id="3.40.50.170">
    <property type="entry name" value="Formyl transferase, N-terminal domain"/>
    <property type="match status" value="1"/>
</dbReference>
<dbReference type="HAMAP" id="MF_01930">
    <property type="entry name" value="PurN"/>
    <property type="match status" value="1"/>
</dbReference>
<dbReference type="InterPro" id="IPR002376">
    <property type="entry name" value="Formyl_transf_N"/>
</dbReference>
<dbReference type="InterPro" id="IPR036477">
    <property type="entry name" value="Formyl_transf_N_sf"/>
</dbReference>
<dbReference type="InterPro" id="IPR004607">
    <property type="entry name" value="GART"/>
</dbReference>
<dbReference type="NCBIfam" id="TIGR00639">
    <property type="entry name" value="PurN"/>
    <property type="match status" value="1"/>
</dbReference>
<dbReference type="PANTHER" id="PTHR43369">
    <property type="entry name" value="PHOSPHORIBOSYLGLYCINAMIDE FORMYLTRANSFERASE"/>
    <property type="match status" value="1"/>
</dbReference>
<dbReference type="PANTHER" id="PTHR43369:SF2">
    <property type="entry name" value="PHOSPHORIBOSYLGLYCINAMIDE FORMYLTRANSFERASE"/>
    <property type="match status" value="1"/>
</dbReference>
<dbReference type="Pfam" id="PF00551">
    <property type="entry name" value="Formyl_trans_N"/>
    <property type="match status" value="1"/>
</dbReference>
<dbReference type="SUPFAM" id="SSF53328">
    <property type="entry name" value="Formyltransferase"/>
    <property type="match status" value="1"/>
</dbReference>
<name>PUR3_MYCTU</name>
<feature type="chain" id="PRO_0000420698" description="Phosphoribosylglycinamide formyltransferase">
    <location>
        <begin position="1"/>
        <end position="215"/>
    </location>
</feature>
<feature type="active site" description="Proton donor" evidence="1">
    <location>
        <position position="118"/>
    </location>
</feature>
<feature type="binding site" evidence="1">
    <location>
        <position position="74"/>
    </location>
    <ligand>
        <name>(6R)-10-formyltetrahydrofolate</name>
        <dbReference type="ChEBI" id="CHEBI:195366"/>
    </ligand>
</feature>
<feature type="binding site">
    <location>
        <begin position="100"/>
        <end position="102"/>
    </location>
    <ligand>
        <name>(6R)-10-formyltetrahydrofolate</name>
        <dbReference type="ChEBI" id="CHEBI:195366"/>
    </ligand>
</feature>
<feature type="binding site" evidence="1">
    <location>
        <position position="116"/>
    </location>
    <ligand>
        <name>(6R)-10-formyltetrahydrofolate</name>
        <dbReference type="ChEBI" id="CHEBI:195366"/>
    </ligand>
</feature>
<feature type="binding site">
    <location>
        <position position="116"/>
    </location>
    <ligand>
        <name>Mg(2+)</name>
        <dbReference type="ChEBI" id="CHEBI:18420"/>
    </ligand>
</feature>
<feature type="binding site">
    <location>
        <position position="117"/>
    </location>
    <ligand>
        <name>Mg(2+)</name>
        <dbReference type="ChEBI" id="CHEBI:18420"/>
    </ligand>
</feature>
<feature type="binding site">
    <location>
        <begin position="150"/>
        <end position="154"/>
    </location>
    <ligand>
        <name>(6R)-10-formyltetrahydrofolate</name>
        <dbReference type="ChEBI" id="CHEBI:195366"/>
    </ligand>
</feature>
<feature type="site" description="Raises pKa of active site His" evidence="1">
    <location>
        <position position="154"/>
    </location>
</feature>
<feature type="strand" evidence="3">
    <location>
        <begin position="5"/>
        <end position="7"/>
    </location>
</feature>
<feature type="strand" evidence="3">
    <location>
        <begin position="11"/>
        <end position="21"/>
    </location>
</feature>
<feature type="helix" evidence="3">
    <location>
        <begin position="24"/>
        <end position="32"/>
    </location>
</feature>
<feature type="strand" evidence="3">
    <location>
        <begin position="38"/>
        <end position="48"/>
    </location>
</feature>
<feature type="helix" evidence="3">
    <location>
        <begin position="51"/>
        <end position="58"/>
    </location>
</feature>
<feature type="strand" evidence="3">
    <location>
        <begin position="63"/>
        <end position="65"/>
    </location>
</feature>
<feature type="helix" evidence="3">
    <location>
        <begin position="68"/>
        <end position="70"/>
    </location>
</feature>
<feature type="strand" evidence="3">
    <location>
        <begin position="71"/>
        <end position="73"/>
    </location>
</feature>
<feature type="helix" evidence="3">
    <location>
        <begin position="74"/>
        <end position="86"/>
    </location>
</feature>
<feature type="strand" evidence="3">
    <location>
        <begin position="91"/>
        <end position="97"/>
    </location>
</feature>
<feature type="helix" evidence="3">
    <location>
        <begin position="104"/>
        <end position="110"/>
    </location>
</feature>
<feature type="turn" evidence="3">
    <location>
        <begin position="111"/>
        <end position="113"/>
    </location>
</feature>
<feature type="strand" evidence="3">
    <location>
        <begin position="114"/>
        <end position="120"/>
    </location>
</feature>
<feature type="helix" evidence="3">
    <location>
        <begin position="130"/>
        <end position="137"/>
    </location>
</feature>
<feature type="strand" evidence="3">
    <location>
        <begin position="140"/>
        <end position="148"/>
    </location>
</feature>
<feature type="strand" evidence="3">
    <location>
        <begin position="151"/>
        <end position="154"/>
    </location>
</feature>
<feature type="strand" evidence="3">
    <location>
        <begin position="158"/>
        <end position="165"/>
    </location>
</feature>
<feature type="helix" evidence="3">
    <location>
        <begin position="172"/>
        <end position="197"/>
    </location>
</feature>
<feature type="strand" evidence="3">
    <location>
        <begin position="199"/>
        <end position="202"/>
    </location>
</feature>
<feature type="strand" evidence="3">
    <location>
        <begin position="205"/>
        <end position="208"/>
    </location>
</feature>
<proteinExistence type="evidence at protein level"/>
<protein>
    <recommendedName>
        <fullName evidence="1">Phosphoribosylglycinamide formyltransferase</fullName>
        <ecNumber evidence="1">2.1.2.2</ecNumber>
    </recommendedName>
    <alternativeName>
        <fullName evidence="1">5'-phosphoribosylglycinamide transformylase</fullName>
    </alternativeName>
    <alternativeName>
        <fullName evidence="1">GAR transformylase</fullName>
        <shortName evidence="1">GART</shortName>
    </alternativeName>
</protein>